<protein>
    <recommendedName>
        <fullName>DNA replication licensing factor MCM7</fullName>
        <ecNumber evidence="3">3.6.4.12</ecNumber>
    </recommendedName>
</protein>
<proteinExistence type="evidence at transcript level"/>
<comment type="function">
    <text evidence="2">Acts as a component of the MCM2-7 complex (MCM complex) which is the replicative helicase essential for 'once per cell cycle' DNA replication initiation and elongation in eukaryotic cells. Core component of CDC45-MCM-GINS (CMG) helicase, the molecular machine that unwinds template DNA during replication, and around which the replisome is built. The active ATPase sites in the MCM2-7 ring are formed through the interaction surfaces of two neighboring subunits such that a critical structure of a conserved arginine finger motif is provided in trans relative to the ATP-binding site of the Walker A box of the adjacent subunit. The six ATPase active sites, however, are likely to contribute differentially to the complex helicase activity. Required for S-phase checkpoint activation upon UV-induced damage.</text>
</comment>
<comment type="catalytic activity">
    <reaction evidence="2">
        <text>ATP + H2O = ADP + phosphate + H(+)</text>
        <dbReference type="Rhea" id="RHEA:13065"/>
        <dbReference type="ChEBI" id="CHEBI:15377"/>
        <dbReference type="ChEBI" id="CHEBI:15378"/>
        <dbReference type="ChEBI" id="CHEBI:30616"/>
        <dbReference type="ChEBI" id="CHEBI:43474"/>
        <dbReference type="ChEBI" id="CHEBI:456216"/>
        <dbReference type="EC" id="3.6.4.12"/>
    </reaction>
    <physiologicalReaction direction="left-to-right" evidence="2">
        <dbReference type="Rhea" id="RHEA:13066"/>
    </physiologicalReaction>
</comment>
<comment type="subunit">
    <text evidence="2 4">Component of the MCM2-7 complex. The complex forms a toroidal hexameric ring with the proposed subunit order MCM2-MCM6-MCM4-MCM7-MCM3-MCM5. Component of the CMG helicase complex, a hexameric ring of related MCM2-7 subunits stabilized by CDC45 and the tetrameric GINS complex. Interacts with the ATR-ATRIP complex and with RAD17. Interacts with TIPIN. Interacts with MCMBP. Interacts with ANKRD17. Component of the replisome complex composed of at least DONSON, MCM2, MCM7, PCNA and TICRR.</text>
</comment>
<comment type="subcellular location">
    <subcellularLocation>
        <location evidence="2">Nucleus</location>
    </subcellularLocation>
    <subcellularLocation>
        <location evidence="2">Chromosome</location>
    </subcellularLocation>
    <text evidence="2">Associated with chromatin before the formation of nuclei and detaches from it as DNA replication progresses.</text>
</comment>
<comment type="PTM">
    <text evidence="2">O-glycosylated (O-GlcNAcylated), in a cell cycle-dependent manner.</text>
</comment>
<comment type="PTM">
    <text evidence="3 4">Ubiquitinated by ECS(LRR1) E3 ubiquitin-protein ligase complex when forks converge following formation of DNA interstrand cross-links. During mitosis, ubiquitinated by TRAIP when forks converge following formation of DNA interstrand cross-links (By similarity). Short ubiquitin chains on MCM7 promote recruitment of DNA glycosylase NEIL3 (By similarity). If the interstrand cross-link cannot be cleaved by NEIL3, the ubiquitin chains continue to grow on MCM7, promoting the unloading of the CMG helicase complex by the VCP/p97 ATPase (By similarity).</text>
</comment>
<comment type="miscellaneous">
    <text evidence="3">Early fractionation of eukaryotic MCM proteins yielded a variety of dimeric, trimeric and tetrameric complexes with unclear biological significance. Specifically a MCM467 subcomplex is shown to have in vitro helicase activity which is inhibited by the MCM2 subunit. The MCM2-7 hexamer is the proposed physiological active complex.</text>
</comment>
<comment type="similarity">
    <text evidence="5">Belongs to the MCM family.</text>
</comment>
<gene>
    <name type="primary">MCM7</name>
</gene>
<organism>
    <name type="scientific">Bos taurus</name>
    <name type="common">Bovine</name>
    <dbReference type="NCBI Taxonomy" id="9913"/>
    <lineage>
        <taxon>Eukaryota</taxon>
        <taxon>Metazoa</taxon>
        <taxon>Chordata</taxon>
        <taxon>Craniata</taxon>
        <taxon>Vertebrata</taxon>
        <taxon>Euteleostomi</taxon>
        <taxon>Mammalia</taxon>
        <taxon>Eutheria</taxon>
        <taxon>Laurasiatheria</taxon>
        <taxon>Artiodactyla</taxon>
        <taxon>Ruminantia</taxon>
        <taxon>Pecora</taxon>
        <taxon>Bovidae</taxon>
        <taxon>Bovinae</taxon>
        <taxon>Bos</taxon>
    </lineage>
</organism>
<keyword id="KW-0007">Acetylation</keyword>
<keyword id="KW-0067">ATP-binding</keyword>
<keyword id="KW-0131">Cell cycle</keyword>
<keyword id="KW-0158">Chromosome</keyword>
<keyword id="KW-0235">DNA replication</keyword>
<keyword id="KW-0238">DNA-binding</keyword>
<keyword id="KW-0325">Glycoprotein</keyword>
<keyword id="KW-0347">Helicase</keyword>
<keyword id="KW-0378">Hydrolase</keyword>
<keyword id="KW-1017">Isopeptide bond</keyword>
<keyword id="KW-0547">Nucleotide-binding</keyword>
<keyword id="KW-0539">Nucleus</keyword>
<keyword id="KW-0597">Phosphoprotein</keyword>
<keyword id="KW-1185">Reference proteome</keyword>
<keyword id="KW-0832">Ubl conjugation</keyword>
<feature type="initiator methionine" description="Removed" evidence="2">
    <location>
        <position position="1"/>
    </location>
</feature>
<feature type="chain" id="PRO_0000238630" description="DNA replication licensing factor MCM7">
    <location>
        <begin position="2"/>
        <end position="719"/>
    </location>
</feature>
<feature type="domain" description="MCM">
    <location>
        <begin position="332"/>
        <end position="538"/>
    </location>
</feature>
<feature type="region of interest" description="Interaction with RAD17" evidence="1">
    <location>
        <begin position="521"/>
        <end position="564"/>
    </location>
</feature>
<feature type="region of interest" description="Interaction with ATRIP" evidence="1">
    <location>
        <begin position="577"/>
        <end position="719"/>
    </location>
</feature>
<feature type="short sequence motif" description="Arginine finger">
    <location>
        <begin position="513"/>
        <end position="516"/>
    </location>
</feature>
<feature type="binding site" evidence="2">
    <location>
        <position position="345"/>
    </location>
    <ligand>
        <name>ATP</name>
        <dbReference type="ChEBI" id="CHEBI:30616"/>
        <label>1</label>
        <note>ligand shared with MCM3</note>
    </ligand>
</feature>
<feature type="binding site" evidence="2">
    <location>
        <position position="384"/>
    </location>
    <ligand>
        <name>ATP</name>
        <dbReference type="ChEBI" id="CHEBI:30616"/>
        <label>1</label>
        <note>ligand shared with MCM3</note>
    </ligand>
</feature>
<feature type="binding site" evidence="2">
    <location>
        <position position="386"/>
    </location>
    <ligand>
        <name>ATP</name>
        <dbReference type="ChEBI" id="CHEBI:30616"/>
        <label>1</label>
        <note>ligand shared with MCM3</note>
    </ligand>
</feature>
<feature type="binding site" evidence="2">
    <location>
        <position position="387"/>
    </location>
    <ligand>
        <name>ATP</name>
        <dbReference type="ChEBI" id="CHEBI:30616"/>
        <label>1</label>
        <note>ligand shared with MCM3</note>
    </ligand>
</feature>
<feature type="binding site" evidence="2">
    <location>
        <position position="388"/>
    </location>
    <ligand>
        <name>ATP</name>
        <dbReference type="ChEBI" id="CHEBI:30616"/>
        <label>1</label>
        <note>ligand shared with MCM3</note>
    </ligand>
</feature>
<feature type="binding site" evidence="2">
    <location>
        <position position="489"/>
    </location>
    <ligand>
        <name>ATP</name>
        <dbReference type="ChEBI" id="CHEBI:30616"/>
        <label>1</label>
        <note>ligand shared with MCM3</note>
    </ligand>
</feature>
<feature type="binding site" evidence="2">
    <location>
        <position position="514"/>
    </location>
    <ligand>
        <name>ATP</name>
        <dbReference type="ChEBI" id="CHEBI:30616"/>
        <label>2</label>
        <note>ligand shared with MCM4</note>
    </ligand>
</feature>
<feature type="binding site" evidence="2">
    <location>
        <position position="604"/>
    </location>
    <ligand>
        <name>ATP</name>
        <dbReference type="ChEBI" id="CHEBI:30616"/>
        <label>2</label>
        <note>ligand shared with MCM4</note>
    </ligand>
</feature>
<feature type="modified residue" description="N-acetylalanine" evidence="2">
    <location>
        <position position="2"/>
    </location>
</feature>
<feature type="modified residue" description="Phosphoserine" evidence="2">
    <location>
        <position position="121"/>
    </location>
</feature>
<feature type="modified residue" description="Phosphoserine" evidence="2">
    <location>
        <position position="314"/>
    </location>
</feature>
<feature type="modified residue" description="Phosphoserine" evidence="2">
    <location>
        <position position="365"/>
    </location>
</feature>
<feature type="modified residue" description="Phosphoserine" evidence="2">
    <location>
        <position position="500"/>
    </location>
</feature>
<feature type="modified residue" description="Phosphoserine" evidence="2">
    <location>
        <position position="678"/>
    </location>
</feature>
<feature type="cross-link" description="Glycyl lysine isopeptide (Lys-Gly) (interchain with G-Cter in SUMO2)" evidence="2">
    <location>
        <position position="15"/>
    </location>
</feature>
<feature type="cross-link" description="Glycyl lysine isopeptide (Lys-Gly) (interchain with G-Cter in SUMO2)" evidence="2">
    <location>
        <position position="28"/>
    </location>
</feature>
<evidence type="ECO:0000250" key="1"/>
<evidence type="ECO:0000250" key="2">
    <source>
        <dbReference type="UniProtKB" id="P33993"/>
    </source>
</evidence>
<evidence type="ECO:0000250" key="3">
    <source>
        <dbReference type="UniProtKB" id="Q61881"/>
    </source>
</evidence>
<evidence type="ECO:0000250" key="4">
    <source>
        <dbReference type="UniProtKB" id="Q91876"/>
    </source>
</evidence>
<evidence type="ECO:0000305" key="5"/>
<reference key="1">
    <citation type="submission" date="2005-08" db="EMBL/GenBank/DDBJ databases">
        <authorList>
            <consortium name="NIH - Mammalian Gene Collection (MGC) project"/>
        </authorList>
    </citation>
    <scope>NUCLEOTIDE SEQUENCE [LARGE SCALE MRNA]</scope>
    <source>
        <strain>Hereford</strain>
        <tissue>Uterus</tissue>
    </source>
</reference>
<dbReference type="EC" id="3.6.4.12" evidence="3"/>
<dbReference type="EMBL" id="BC103287">
    <property type="protein sequence ID" value="AAI03288.1"/>
    <property type="molecule type" value="mRNA"/>
</dbReference>
<dbReference type="RefSeq" id="NP_001020516.2">
    <property type="nucleotide sequence ID" value="NM_001025345.2"/>
</dbReference>
<dbReference type="SMR" id="Q3ZBH9"/>
<dbReference type="FunCoup" id="Q3ZBH9">
    <property type="interactions" value="3748"/>
</dbReference>
<dbReference type="IntAct" id="Q3ZBH9">
    <property type="interactions" value="1"/>
</dbReference>
<dbReference type="STRING" id="9913.ENSBTAP00000003728"/>
<dbReference type="PaxDb" id="9913-ENSBTAP00000003728"/>
<dbReference type="PeptideAtlas" id="Q3ZBH9"/>
<dbReference type="Ensembl" id="ENSBTAT00000003728.5">
    <property type="protein sequence ID" value="ENSBTAP00000003728.4"/>
    <property type="gene ID" value="ENSBTAG00000030965.4"/>
</dbReference>
<dbReference type="GeneID" id="539924"/>
<dbReference type="KEGG" id="bta:539924"/>
<dbReference type="CTD" id="4176"/>
<dbReference type="VEuPathDB" id="HostDB:ENSBTAG00000030965"/>
<dbReference type="VGNC" id="VGNC:31313">
    <property type="gene designation" value="MCM7"/>
</dbReference>
<dbReference type="eggNOG" id="KOG0482">
    <property type="taxonomic scope" value="Eukaryota"/>
</dbReference>
<dbReference type="GeneTree" id="ENSGT01050000244824"/>
<dbReference type="HOGENOM" id="CLU_000995_7_2_1"/>
<dbReference type="InParanoid" id="Q3ZBH9"/>
<dbReference type="OMA" id="AQHVTYV"/>
<dbReference type="OrthoDB" id="3207464at2759"/>
<dbReference type="TreeFam" id="TF300400"/>
<dbReference type="Reactome" id="R-BTA-176187">
    <property type="pathway name" value="Activation of ATR in response to replication stress"/>
</dbReference>
<dbReference type="Reactome" id="R-BTA-68867">
    <property type="pathway name" value="Assembly of the pre-replicative complex"/>
</dbReference>
<dbReference type="Reactome" id="R-BTA-68949">
    <property type="pathway name" value="Orc1 removal from chromatin"/>
</dbReference>
<dbReference type="Reactome" id="R-BTA-68962">
    <property type="pathway name" value="Activation of the pre-replicative complex"/>
</dbReference>
<dbReference type="Reactome" id="R-BTA-69052">
    <property type="pathway name" value="Switching of origins to a post-replicative state"/>
</dbReference>
<dbReference type="Proteomes" id="UP000009136">
    <property type="component" value="Chromosome 25"/>
</dbReference>
<dbReference type="Bgee" id="ENSBTAG00000030965">
    <property type="expression patterns" value="Expressed in nasopharynx and 111 other cell types or tissues"/>
</dbReference>
<dbReference type="GO" id="GO:0071162">
    <property type="term" value="C:CMG complex"/>
    <property type="evidence" value="ECO:0000250"/>
    <property type="project" value="UniProtKB"/>
</dbReference>
<dbReference type="GO" id="GO:0042555">
    <property type="term" value="C:MCM complex"/>
    <property type="evidence" value="ECO:0000250"/>
    <property type="project" value="UniProtKB"/>
</dbReference>
<dbReference type="GO" id="GO:0005634">
    <property type="term" value="C:nucleus"/>
    <property type="evidence" value="ECO:0000250"/>
    <property type="project" value="AgBase"/>
</dbReference>
<dbReference type="GO" id="GO:0005524">
    <property type="term" value="F:ATP binding"/>
    <property type="evidence" value="ECO:0007669"/>
    <property type="project" value="UniProtKB-KW"/>
</dbReference>
<dbReference type="GO" id="GO:0016887">
    <property type="term" value="F:ATP hydrolysis activity"/>
    <property type="evidence" value="ECO:0007669"/>
    <property type="project" value="InterPro"/>
</dbReference>
<dbReference type="GO" id="GO:0003678">
    <property type="term" value="F:DNA helicase activity"/>
    <property type="evidence" value="ECO:0000250"/>
    <property type="project" value="AgBase"/>
</dbReference>
<dbReference type="GO" id="GO:0003697">
    <property type="term" value="F:single-stranded DNA binding"/>
    <property type="evidence" value="ECO:0000250"/>
    <property type="project" value="AgBase"/>
</dbReference>
<dbReference type="GO" id="GO:0008283">
    <property type="term" value="P:cell population proliferation"/>
    <property type="evidence" value="ECO:0000250"/>
    <property type="project" value="AgBase"/>
</dbReference>
<dbReference type="GO" id="GO:0006974">
    <property type="term" value="P:DNA damage response"/>
    <property type="evidence" value="ECO:0000250"/>
    <property type="project" value="AgBase"/>
</dbReference>
<dbReference type="GO" id="GO:0006260">
    <property type="term" value="P:DNA replication"/>
    <property type="evidence" value="ECO:0000250"/>
    <property type="project" value="AgBase"/>
</dbReference>
<dbReference type="GO" id="GO:0006270">
    <property type="term" value="P:DNA replication initiation"/>
    <property type="evidence" value="ECO:0000318"/>
    <property type="project" value="GO_Central"/>
</dbReference>
<dbReference type="GO" id="GO:0006271">
    <property type="term" value="P:DNA strand elongation involved in DNA replication"/>
    <property type="evidence" value="ECO:0000318"/>
    <property type="project" value="GO_Central"/>
</dbReference>
<dbReference type="GO" id="GO:0000727">
    <property type="term" value="P:double-strand break repair via break-induced replication"/>
    <property type="evidence" value="ECO:0000318"/>
    <property type="project" value="GO_Central"/>
</dbReference>
<dbReference type="GO" id="GO:0042325">
    <property type="term" value="P:regulation of phosphorylation"/>
    <property type="evidence" value="ECO:0000250"/>
    <property type="project" value="AgBase"/>
</dbReference>
<dbReference type="CDD" id="cd17758">
    <property type="entry name" value="MCM7"/>
    <property type="match status" value="1"/>
</dbReference>
<dbReference type="FunFam" id="2.20.28.10:FF:000004">
    <property type="entry name" value="DNA replication licensing factor MCM7"/>
    <property type="match status" value="1"/>
</dbReference>
<dbReference type="FunFam" id="3.30.1640.10:FF:000007">
    <property type="entry name" value="DNA replication licensing factor MCM7"/>
    <property type="match status" value="1"/>
</dbReference>
<dbReference type="FunFam" id="3.40.50.300:FF:000288">
    <property type="entry name" value="DNA replication licensing factor MCM7"/>
    <property type="match status" value="1"/>
</dbReference>
<dbReference type="Gene3D" id="2.20.28.10">
    <property type="match status" value="1"/>
</dbReference>
<dbReference type="Gene3D" id="3.30.1640.10">
    <property type="entry name" value="mini-chromosome maintenance (MCM) complex, chain A, domain 1"/>
    <property type="match status" value="1"/>
</dbReference>
<dbReference type="Gene3D" id="2.40.50.140">
    <property type="entry name" value="Nucleic acid-binding proteins"/>
    <property type="match status" value="1"/>
</dbReference>
<dbReference type="Gene3D" id="3.40.50.300">
    <property type="entry name" value="P-loop containing nucleotide triphosphate hydrolases"/>
    <property type="match status" value="1"/>
</dbReference>
<dbReference type="InterPro" id="IPR003593">
    <property type="entry name" value="AAA+_ATPase"/>
</dbReference>
<dbReference type="InterPro" id="IPR031327">
    <property type="entry name" value="MCM"/>
</dbReference>
<dbReference type="InterPro" id="IPR008050">
    <property type="entry name" value="MCM7"/>
</dbReference>
<dbReference type="InterPro" id="IPR018525">
    <property type="entry name" value="MCM_CS"/>
</dbReference>
<dbReference type="InterPro" id="IPR001208">
    <property type="entry name" value="MCM_dom"/>
</dbReference>
<dbReference type="InterPro" id="IPR041562">
    <property type="entry name" value="MCM_lid"/>
</dbReference>
<dbReference type="InterPro" id="IPR027925">
    <property type="entry name" value="MCM_N"/>
</dbReference>
<dbReference type="InterPro" id="IPR033762">
    <property type="entry name" value="MCM_OB"/>
</dbReference>
<dbReference type="InterPro" id="IPR012340">
    <property type="entry name" value="NA-bd_OB-fold"/>
</dbReference>
<dbReference type="InterPro" id="IPR027417">
    <property type="entry name" value="P-loop_NTPase"/>
</dbReference>
<dbReference type="PANTHER" id="PTHR11630">
    <property type="entry name" value="DNA REPLICATION LICENSING FACTOR MCM FAMILY MEMBER"/>
    <property type="match status" value="1"/>
</dbReference>
<dbReference type="PANTHER" id="PTHR11630:SF26">
    <property type="entry name" value="DNA REPLICATION LICENSING FACTOR MCM7"/>
    <property type="match status" value="1"/>
</dbReference>
<dbReference type="Pfam" id="PF24901">
    <property type="entry name" value="HTH_MCM7"/>
    <property type="match status" value="1"/>
</dbReference>
<dbReference type="Pfam" id="PF00493">
    <property type="entry name" value="MCM"/>
    <property type="match status" value="1"/>
</dbReference>
<dbReference type="Pfam" id="PF17855">
    <property type="entry name" value="MCM_lid"/>
    <property type="match status" value="1"/>
</dbReference>
<dbReference type="Pfam" id="PF14551">
    <property type="entry name" value="MCM_N"/>
    <property type="match status" value="1"/>
</dbReference>
<dbReference type="Pfam" id="PF17207">
    <property type="entry name" value="MCM_OB"/>
    <property type="match status" value="1"/>
</dbReference>
<dbReference type="PRINTS" id="PR01657">
    <property type="entry name" value="MCMFAMILY"/>
</dbReference>
<dbReference type="PRINTS" id="PR01663">
    <property type="entry name" value="MCMPROTEIN7"/>
</dbReference>
<dbReference type="SMART" id="SM00382">
    <property type="entry name" value="AAA"/>
    <property type="match status" value="1"/>
</dbReference>
<dbReference type="SMART" id="SM00350">
    <property type="entry name" value="MCM"/>
    <property type="match status" value="1"/>
</dbReference>
<dbReference type="SUPFAM" id="SSF50249">
    <property type="entry name" value="Nucleic acid-binding proteins"/>
    <property type="match status" value="1"/>
</dbReference>
<dbReference type="SUPFAM" id="SSF52540">
    <property type="entry name" value="P-loop containing nucleoside triphosphate hydrolases"/>
    <property type="match status" value="1"/>
</dbReference>
<dbReference type="PROSITE" id="PS00847">
    <property type="entry name" value="MCM_1"/>
    <property type="match status" value="1"/>
</dbReference>
<dbReference type="PROSITE" id="PS50051">
    <property type="entry name" value="MCM_2"/>
    <property type="match status" value="1"/>
</dbReference>
<sequence length="719" mass="81315">MALKDYVLEKDKVKKFLQEFYQDDESGKKQFKYGNQLVQLAHREQVAMYVDLDDIAEDDPELVDSICENTKRYARLFADAVQELLPQYKEREVVNKDVLDVYIEHRLMMEQRSRDPGAARSPQNQYPPELMRRFELYFQGPSSNKPRVIREVRADSVGKLVTVRGIVTRVSEVKPRMVVATYTCDQCGAETYQPIQSPTFMPLIMCPSQECQTNRSGGRLYLQTRGSKFIKFQEMKMQEHSDQVPVGNIPRSITVLVEGENTRIAQPGDHVSVTGIFLPILRTGFRQMVQGLLSETYLEAHRIVKMSKSEEDESGAGELTREELRQITEEDFYEKLAASIAPEIYGHEDVKKALLLLLVGGVDQSPRGMKIRGNINICLMGDPGVAKSQLLSYIDRLAPRSQYTTGRGSSGVGLTAAVLRDSVSGELTLEGGALVLADQGVCCIDEFDKMAEADRTAIHEVMEQQTISIAKAGILTTLNARCSILAAANPAYGRYNPRRSLEQNIQLPAALLSRFDLLWLIQDRPDRDNDLRLAQHITYVHQHSRQPPAQFEPLDMKLMRRYIAMCREKQPAVPESLADYITAAYVEMRREAWASKDATYTSARTLLAILRLSTALARLRMVDTVEKEDVNEAIRLMEMSKDSLLGDKGQTARTQRPADVIFATVRELVSEGQSVRFSEAEQRCISRGFTPAQFQAALDEYEELNVWQVNTARTRITFV</sequence>
<name>MCM7_BOVIN</name>
<accession>Q3ZBH9</accession>